<comment type="function">
    <text>Precursors of the cornified envelope of the stratum corneum.</text>
</comment>
<comment type="subunit">
    <text evidence="3">Interacts with CYSRT1.</text>
</comment>
<comment type="interaction">
    <interactant intactId="EBI-11955335">
        <id>Q5T753</id>
    </interactant>
    <interactant intactId="EBI-1211484">
        <id>P05187</id>
        <label>ALPP</label>
    </interactant>
    <organismsDiffer>false</organismsDiffer>
    <experiments>3</experiments>
</comment>
<comment type="interaction">
    <interactant intactId="EBI-11955335">
        <id>Q5T753</id>
    </interactant>
    <interactant intactId="EBI-744545">
        <id>Q8NEC5</id>
        <label>CATSPER1</label>
    </interactant>
    <organismsDiffer>false</organismsDiffer>
    <experiments>3</experiments>
</comment>
<comment type="interaction">
    <interactant intactId="EBI-11955335">
        <id>Q5T753</id>
    </interactant>
    <interactant intactId="EBI-3867333">
        <id>A8MQ03</id>
        <label>CYSRT1</label>
    </interactant>
    <organismsDiffer>false</organismsDiffer>
    <experiments>3</experiments>
</comment>
<comment type="interaction">
    <interactant intactId="EBI-11955335">
        <id>Q5T753</id>
    </interactant>
    <interactant intactId="EBI-743414">
        <id>O95967</id>
        <label>EFEMP2</label>
    </interactant>
    <organismsDiffer>false</organismsDiffer>
    <experiments>3</experiments>
</comment>
<comment type="interaction">
    <interactant intactId="EBI-11955335">
        <id>Q5T753</id>
    </interactant>
    <interactant intactId="EBI-8468186">
        <id>Q8IZU1</id>
        <label>FAM9A</label>
    </interactant>
    <organismsDiffer>false</organismsDiffer>
    <experiments>3</experiments>
</comment>
<comment type="interaction">
    <interactant intactId="EBI-11955335">
        <id>Q5T753</id>
    </interactant>
    <interactant intactId="EBI-9050116">
        <id>Q9BTY2</id>
        <label>FUCA2</label>
    </interactant>
    <organismsDiffer>false</organismsDiffer>
    <experiments>3</experiments>
</comment>
<comment type="interaction">
    <interactant intactId="EBI-11955335">
        <id>Q5T753</id>
    </interactant>
    <interactant intactId="EBI-747754">
        <id>P28799</id>
        <label>GRN</label>
    </interactant>
    <organismsDiffer>false</organismsDiffer>
    <experiments>3</experiments>
</comment>
<comment type="interaction">
    <interactant intactId="EBI-11955335">
        <id>Q5T753</id>
    </interactant>
    <interactant intactId="EBI-11959885">
        <id>Q07627</id>
        <label>KRTAP1-1</label>
    </interactant>
    <organismsDiffer>false</organismsDiffer>
    <experiments>3</experiments>
</comment>
<comment type="interaction">
    <interactant intactId="EBI-11955335">
        <id>Q5T753</id>
    </interactant>
    <interactant intactId="EBI-11749135">
        <id>Q8IUG1</id>
        <label>KRTAP1-3</label>
    </interactant>
    <organismsDiffer>false</organismsDiffer>
    <experiments>3</experiments>
</comment>
<comment type="interaction">
    <interactant intactId="EBI-11955335">
        <id>Q5T753</id>
    </interactant>
    <interactant intactId="EBI-11741292">
        <id>Q9BYS1</id>
        <label>KRTAP1-5</label>
    </interactant>
    <organismsDiffer>false</organismsDiffer>
    <experiments>3</experiments>
</comment>
<comment type="interaction">
    <interactant intactId="EBI-11955335">
        <id>Q5T753</id>
    </interactant>
    <interactant intactId="EBI-11955579">
        <id>P60014</id>
        <label>KRTAP10-10</label>
    </interactant>
    <organismsDiffer>false</organismsDiffer>
    <experiments>3</experiments>
</comment>
<comment type="interaction">
    <interactant intactId="EBI-11955335">
        <id>Q5T753</id>
    </interactant>
    <interactant intactId="EBI-10217483">
        <id>P60412</id>
        <label>KRTAP10-11</label>
    </interactant>
    <organismsDiffer>false</organismsDiffer>
    <experiments>3</experiments>
</comment>
<comment type="interaction">
    <interactant intactId="EBI-11955335">
        <id>Q5T753</id>
    </interactant>
    <interactant intactId="EBI-10172150">
        <id>P60370</id>
        <label>KRTAP10-5</label>
    </interactant>
    <organismsDiffer>false</organismsDiffer>
    <experiments>3</experiments>
</comment>
<comment type="interaction">
    <interactant intactId="EBI-11955335">
        <id>Q5T753</id>
    </interactant>
    <interactant intactId="EBI-12012928">
        <id>P60371</id>
        <label>KRTAP10-6</label>
    </interactant>
    <organismsDiffer>false</organismsDiffer>
    <experiments>3</experiments>
</comment>
<comment type="interaction">
    <interactant intactId="EBI-11955335">
        <id>Q5T753</id>
    </interactant>
    <interactant intactId="EBI-10171774">
        <id>P60410</id>
        <label>KRTAP10-8</label>
    </interactant>
    <organismsDiffer>false</organismsDiffer>
    <experiments>3</experiments>
</comment>
<comment type="interaction">
    <interactant intactId="EBI-11955335">
        <id>Q5T753</id>
    </interactant>
    <interactant intactId="EBI-10172052">
        <id>P60411</id>
        <label>KRTAP10-9</label>
    </interactant>
    <organismsDiffer>false</organismsDiffer>
    <experiments>3</experiments>
</comment>
<comment type="interaction">
    <interactant intactId="EBI-11955335">
        <id>Q5T753</id>
    </interactant>
    <interactant intactId="EBI-10210845">
        <id>P59990</id>
        <label>KRTAP12-1</label>
    </interactant>
    <organismsDiffer>false</organismsDiffer>
    <experiments>3</experiments>
</comment>
<comment type="interaction">
    <interactant intactId="EBI-11955335">
        <id>Q5T753</id>
    </interactant>
    <interactant intactId="EBI-11953334">
        <id>P60328</id>
        <label>KRTAP12-3</label>
    </interactant>
    <organismsDiffer>false</organismsDiffer>
    <experiments>3</experiments>
</comment>
<comment type="interaction">
    <interactant intactId="EBI-11955335">
        <id>Q5T753</id>
    </interactant>
    <interactant intactId="EBI-10176396">
        <id>P60329</id>
        <label>KRTAP12-4</label>
    </interactant>
    <organismsDiffer>false</organismsDiffer>
    <experiments>3</experiments>
</comment>
<comment type="interaction">
    <interactant intactId="EBI-11955335">
        <id>Q5T753</id>
    </interactant>
    <interactant intactId="EBI-11988175">
        <id>Q9BYP8</id>
        <label>KRTAP17-1</label>
    </interactant>
    <organismsDiffer>false</organismsDiffer>
    <experiments>3</experiments>
</comment>
<comment type="interaction">
    <interactant intactId="EBI-11955335">
        <id>Q5T753</id>
    </interactant>
    <interactant intactId="EBI-14065470">
        <id>Q9BYR9</id>
        <label>KRTAP2-4</label>
    </interactant>
    <organismsDiffer>false</organismsDiffer>
    <experiments>3</experiments>
</comment>
<comment type="interaction">
    <interactant intactId="EBI-11955335">
        <id>Q5T753</id>
    </interactant>
    <interactant intactId="EBI-10302392">
        <id>Q9BYQ6</id>
        <label>KRTAP4-11</label>
    </interactant>
    <organismsDiffer>false</organismsDiffer>
    <experiments>3</experiments>
</comment>
<comment type="interaction">
    <interactant intactId="EBI-11955335">
        <id>Q5T753</id>
    </interactant>
    <interactant intactId="EBI-739863">
        <id>Q9BQ66</id>
        <label>KRTAP4-12</label>
    </interactant>
    <organismsDiffer>false</organismsDiffer>
    <experiments>6</experiments>
</comment>
<comment type="interaction">
    <interactant intactId="EBI-11955335">
        <id>Q5T753</id>
    </interactant>
    <interactant intactId="EBI-10172511">
        <id>Q9BYR5</id>
        <label>KRTAP4-2</label>
    </interactant>
    <organismsDiffer>false</organismsDiffer>
    <experiments>3</experiments>
</comment>
<comment type="interaction">
    <interactant intactId="EBI-11955335">
        <id>Q5T753</id>
    </interactant>
    <interactant intactId="EBI-11958132">
        <id>Q9BYR3</id>
        <label>KRTAP4-4</label>
    </interactant>
    <organismsDiffer>false</organismsDiffer>
    <experiments>3</experiments>
</comment>
<comment type="interaction">
    <interactant intactId="EBI-11955335">
        <id>Q5T753</id>
    </interactant>
    <interactant intactId="EBI-11993254">
        <id>Q9BYR2</id>
        <label>KRTAP4-5</label>
    </interactant>
    <organismsDiffer>false</organismsDiffer>
    <experiments>3</experiments>
</comment>
<comment type="interaction">
    <interactant intactId="EBI-11955335">
        <id>Q5T753</id>
    </interactant>
    <interactant intactId="EBI-11993296">
        <id>Q6L8G4</id>
        <label>KRTAP5-11</label>
    </interactant>
    <organismsDiffer>false</organismsDiffer>
    <experiments>4</experiments>
</comment>
<comment type="interaction">
    <interactant intactId="EBI-11955335">
        <id>Q5T753</id>
    </interactant>
    <interactant intactId="EBI-11958178">
        <id>Q701N4</id>
        <label>KRTAP5-2</label>
    </interactant>
    <organismsDiffer>false</organismsDiffer>
    <experiments>5</experiments>
</comment>
<comment type="interaction">
    <interactant intactId="EBI-11955335">
        <id>Q5T753</id>
    </interactant>
    <interactant intactId="EBI-11963072">
        <id>Q6L8H1</id>
        <label>KRTAP5-4</label>
    </interactant>
    <organismsDiffer>false</organismsDiffer>
    <experiments>3</experiments>
</comment>
<comment type="interaction">
    <interactant intactId="EBI-11955335">
        <id>Q5T753</id>
    </interactant>
    <interactant intactId="EBI-10250562">
        <id>Q6L8G9</id>
        <label>KRTAP5-6</label>
    </interactant>
    <organismsDiffer>false</organismsDiffer>
    <experiments>3</experiments>
</comment>
<comment type="interaction">
    <interactant intactId="EBI-11955335">
        <id>Q5T753</id>
    </interactant>
    <interactant intactId="EBI-11987425">
        <id>Q6L8G8</id>
        <label>KRTAP5-7</label>
    </interactant>
    <organismsDiffer>false</organismsDiffer>
    <experiments>3</experiments>
</comment>
<comment type="interaction">
    <interactant intactId="EBI-11955335">
        <id>Q5T753</id>
    </interactant>
    <interactant intactId="EBI-3958099">
        <id>P26371</id>
        <label>KRTAP5-9</label>
    </interactant>
    <organismsDiffer>false</organismsDiffer>
    <experiments>6</experiments>
</comment>
<comment type="interaction">
    <interactant intactId="EBI-11955335">
        <id>Q5T753</id>
    </interactant>
    <interactant intactId="EBI-22311199">
        <id>Q3LI67</id>
        <label>KRTAP6-3</label>
    </interactant>
    <organismsDiffer>false</organismsDiffer>
    <experiments>3</experiments>
</comment>
<comment type="interaction">
    <interactant intactId="EBI-11955335">
        <id>Q5T753</id>
    </interactant>
    <interactant intactId="EBI-1044640">
        <id>Q9BYQ4</id>
        <label>KRTAP9-2</label>
    </interactant>
    <organismsDiffer>false</organismsDiffer>
    <experiments>5</experiments>
</comment>
<comment type="interaction">
    <interactant intactId="EBI-11955335">
        <id>Q5T753</id>
    </interactant>
    <interactant intactId="EBI-1043191">
        <id>Q9BYQ3</id>
        <label>KRTAP9-3</label>
    </interactant>
    <organismsDiffer>false</organismsDiffer>
    <experiments>3</experiments>
</comment>
<comment type="interaction">
    <interactant intactId="EBI-11955335">
        <id>Q5T753</id>
    </interactant>
    <interactant intactId="EBI-11958364">
        <id>Q9BYQ0</id>
        <label>KRTAP9-8</label>
    </interactant>
    <organismsDiffer>false</organismsDiffer>
    <experiments>3</experiments>
</comment>
<comment type="interaction">
    <interactant intactId="EBI-11955335">
        <id>Q5T753</id>
    </interactant>
    <interactant intactId="EBI-11962058">
        <id>Q5T7P2</id>
        <label>LCE1A</label>
    </interactant>
    <organismsDiffer>false</organismsDiffer>
    <experiments>3</experiments>
</comment>
<comment type="interaction">
    <interactant intactId="EBI-11955335">
        <id>Q5T753</id>
    </interactant>
    <interactant intactId="EBI-10245913">
        <id>Q5T7P3</id>
        <label>LCE1B</label>
    </interactant>
    <organismsDiffer>false</organismsDiffer>
    <experiments>3</experiments>
</comment>
<comment type="interaction">
    <interactant intactId="EBI-11955335">
        <id>Q5T753</id>
    </interactant>
    <interactant intactId="EBI-11741311">
        <id>Q5T752</id>
        <label>LCE1D</label>
    </interactant>
    <organismsDiffer>false</organismsDiffer>
    <experiments>3</experiments>
</comment>
<comment type="interaction">
    <interactant intactId="EBI-11955335">
        <id>Q5T753</id>
    </interactant>
    <interactant intactId="EBI-11955335">
        <id>Q5T753</id>
        <label>LCE1E</label>
    </interactant>
    <organismsDiffer>false</organismsDiffer>
    <experiments>3</experiments>
</comment>
<comment type="interaction">
    <interactant intactId="EBI-11955335">
        <id>Q5T753</id>
    </interactant>
    <interactant intactId="EBI-11958008">
        <id>Q5T754</id>
        <label>LCE1F</label>
    </interactant>
    <organismsDiffer>false</organismsDiffer>
    <experiments>6</experiments>
</comment>
<comment type="interaction">
    <interactant intactId="EBI-11955335">
        <id>Q5T753</id>
    </interactant>
    <interactant intactId="EBI-11478468">
        <id>O14633</id>
        <label>LCE2B</label>
    </interactant>
    <organismsDiffer>false</organismsDiffer>
    <experiments>3</experiments>
</comment>
<comment type="interaction">
    <interactant intactId="EBI-11955335">
        <id>Q5T753</id>
    </interactant>
    <interactant intactId="EBI-11973993">
        <id>Q5TA81</id>
        <label>LCE2C</label>
    </interactant>
    <organismsDiffer>false</organismsDiffer>
    <experiments>3</experiments>
</comment>
<comment type="interaction">
    <interactant intactId="EBI-11955335">
        <id>Q5T753</id>
    </interactant>
    <interactant intactId="EBI-11974495">
        <id>Q5TA77</id>
        <label>LCE3B</label>
    </interactant>
    <organismsDiffer>false</organismsDiffer>
    <experiments>3</experiments>
</comment>
<comment type="interaction">
    <interactant intactId="EBI-11955335">
        <id>Q5T753</id>
    </interactant>
    <interactant intactId="EBI-10246358">
        <id>Q5TA78</id>
        <label>LCE4A</label>
    </interactant>
    <organismsDiffer>false</organismsDiffer>
    <experiments>6</experiments>
</comment>
<comment type="interaction">
    <interactant intactId="EBI-11955335">
        <id>Q5T753</id>
    </interactant>
    <interactant intactId="EBI-11955689">
        <id>Q5TCM9</id>
        <label>LCE5A</label>
    </interactant>
    <organismsDiffer>false</organismsDiffer>
    <experiments>3</experiments>
</comment>
<comment type="interaction">
    <interactant intactId="EBI-11955335">
        <id>Q5T753</id>
    </interactant>
    <interactant intactId="EBI-2683507">
        <id>Q8N5G2</id>
        <label>MACO1</label>
    </interactant>
    <organismsDiffer>false</organismsDiffer>
    <experiments>3</experiments>
</comment>
<comment type="interaction">
    <interactant intactId="EBI-11955335">
        <id>Q5T753</id>
    </interactant>
    <interactant intactId="EBI-16439278">
        <id>Q6FHY5</id>
        <label>MEOX2</label>
    </interactant>
    <organismsDiffer>false</organismsDiffer>
    <experiments>3</experiments>
</comment>
<comment type="interaction">
    <interactant intactId="EBI-11955335">
        <id>Q5T753</id>
    </interactant>
    <interactant intactId="EBI-22310682">
        <id>P0DPK4</id>
        <label>NOTCH2NLC</label>
    </interactant>
    <organismsDiffer>false</organismsDiffer>
    <experiments>3</experiments>
</comment>
<comment type="interaction">
    <interactant intactId="EBI-11955335">
        <id>Q5T753</id>
    </interactant>
    <interactant intactId="EBI-741158">
        <id>Q96HA8</id>
        <label>NTAQ1</label>
    </interactant>
    <organismsDiffer>false</organismsDiffer>
    <experiments>3</experiments>
</comment>
<comment type="interaction">
    <interactant intactId="EBI-11955335">
        <id>Q5T753</id>
    </interactant>
    <interactant intactId="EBI-348567">
        <id>O75928-2</id>
        <label>PIAS2</label>
    </interactant>
    <organismsDiffer>false</organismsDiffer>
    <experiments>3</experiments>
</comment>
<comment type="interaction">
    <interactant intactId="EBI-11955335">
        <id>Q5T753</id>
    </interactant>
    <interactant intactId="EBI-3918154">
        <id>Q9UGC6</id>
        <label>RGS17</label>
    </interactant>
    <organismsDiffer>false</organismsDiffer>
    <experiments>3</experiments>
</comment>
<comment type="interaction">
    <interactant intactId="EBI-11955335">
        <id>Q5T753</id>
    </interactant>
    <interactant intactId="EBI-2340927">
        <id>P78317</id>
        <label>RNF4</label>
    </interactant>
    <organismsDiffer>false</organismsDiffer>
    <experiments>3</experiments>
</comment>
<comment type="interaction">
    <interactant intactId="EBI-11955335">
        <id>Q5T753</id>
    </interactant>
    <interactant intactId="EBI-750494">
        <id>P49901</id>
        <label>SMCP</label>
    </interactant>
    <organismsDiffer>false</organismsDiffer>
    <experiments>3</experiments>
</comment>
<comment type="interaction">
    <interactant intactId="EBI-11955335">
        <id>Q5T753</id>
    </interactant>
    <interactant intactId="EBI-2562368">
        <id>P22735</id>
        <label>TGM1</label>
    </interactant>
    <organismsDiffer>false</organismsDiffer>
    <experiments>3</experiments>
</comment>
<comment type="interaction">
    <interactant intactId="EBI-11955335">
        <id>Q5T753</id>
    </interactant>
    <interactant intactId="EBI-5235829">
        <id>Q8IWZ5</id>
        <label>TRIM42</label>
    </interactant>
    <organismsDiffer>false</organismsDiffer>
    <experiments>3</experiments>
</comment>
<comment type="interaction">
    <interactant intactId="EBI-11955335">
        <id>Q5T753</id>
    </interactant>
    <interactant intactId="EBI-7265024">
        <id>Q8N3Z6</id>
        <label>ZCCHC7</label>
    </interactant>
    <organismsDiffer>false</organismsDiffer>
    <experiments>3</experiments>
</comment>
<comment type="tissue specificity">
    <text evidence="2">Skin-specific. Expression was readily detected in adult trunk skin, adult arm skin, fetal skin, penal skin, vulva, esophagus and tongue. Not expressed in the cervix, rectum, lung, colon, or placenta.</text>
</comment>
<comment type="induction">
    <text evidence="2">By UVB.</text>
</comment>
<comment type="miscellaneous">
    <text>Belongs to the LCE cluster present on 1q21.</text>
</comment>
<comment type="similarity">
    <text evidence="4">Belongs to the LCE family.</text>
</comment>
<proteinExistence type="evidence at protein level"/>
<gene>
    <name type="primary">LCE1E</name>
    <name type="synonym">LEP5</name>
</gene>
<feature type="chain" id="PRO_0000235328" description="Late cornified envelope protein 1E">
    <location>
        <begin position="1"/>
        <end position="118"/>
    </location>
</feature>
<feature type="region of interest" description="Disordered" evidence="1">
    <location>
        <begin position="1"/>
        <end position="23"/>
    </location>
</feature>
<feature type="region of interest" description="Disordered" evidence="1">
    <location>
        <begin position="84"/>
        <end position="118"/>
    </location>
</feature>
<feature type="compositionally biased region" description="Low complexity" evidence="1">
    <location>
        <begin position="1"/>
        <end position="10"/>
    </location>
</feature>
<feature type="compositionally biased region" description="Pro residues" evidence="1">
    <location>
        <begin position="11"/>
        <end position="23"/>
    </location>
</feature>
<feature type="compositionally biased region" description="Low complexity" evidence="1">
    <location>
        <begin position="92"/>
        <end position="103"/>
    </location>
</feature>
<feature type="compositionally biased region" description="Gly residues" evidence="1">
    <location>
        <begin position="104"/>
        <end position="118"/>
    </location>
</feature>
<feature type="sequence variant" id="VAR_060066" description="In dbSNP:rs11205106.">
    <original>S</original>
    <variation>G</variation>
    <location>
        <position position="59"/>
    </location>
</feature>
<feature type="sequence variant" id="VAR_062117" description="In dbSNP:rs56313719.">
    <original>G</original>
    <variation>S</variation>
    <location>
        <position position="111"/>
    </location>
</feature>
<reference key="1">
    <citation type="journal article" date="2006" name="Nature">
        <title>The DNA sequence and biological annotation of human chromosome 1.</title>
        <authorList>
            <person name="Gregory S.G."/>
            <person name="Barlow K.F."/>
            <person name="McLay K.E."/>
            <person name="Kaul R."/>
            <person name="Swarbreck D."/>
            <person name="Dunham A."/>
            <person name="Scott C.E."/>
            <person name="Howe K.L."/>
            <person name="Woodfine K."/>
            <person name="Spencer C.C.A."/>
            <person name="Jones M.C."/>
            <person name="Gillson C."/>
            <person name="Searle S."/>
            <person name="Zhou Y."/>
            <person name="Kokocinski F."/>
            <person name="McDonald L."/>
            <person name="Evans R."/>
            <person name="Phillips K."/>
            <person name="Atkinson A."/>
            <person name="Cooper R."/>
            <person name="Jones C."/>
            <person name="Hall R.E."/>
            <person name="Andrews T.D."/>
            <person name="Lloyd C."/>
            <person name="Ainscough R."/>
            <person name="Almeida J.P."/>
            <person name="Ambrose K.D."/>
            <person name="Anderson F."/>
            <person name="Andrew R.W."/>
            <person name="Ashwell R.I.S."/>
            <person name="Aubin K."/>
            <person name="Babbage A.K."/>
            <person name="Bagguley C.L."/>
            <person name="Bailey J."/>
            <person name="Beasley H."/>
            <person name="Bethel G."/>
            <person name="Bird C.P."/>
            <person name="Bray-Allen S."/>
            <person name="Brown J.Y."/>
            <person name="Brown A.J."/>
            <person name="Buckley D."/>
            <person name="Burton J."/>
            <person name="Bye J."/>
            <person name="Carder C."/>
            <person name="Chapman J.C."/>
            <person name="Clark S.Y."/>
            <person name="Clarke G."/>
            <person name="Clee C."/>
            <person name="Cobley V."/>
            <person name="Collier R.E."/>
            <person name="Corby N."/>
            <person name="Coville G.J."/>
            <person name="Davies J."/>
            <person name="Deadman R."/>
            <person name="Dunn M."/>
            <person name="Earthrowl M."/>
            <person name="Ellington A.G."/>
            <person name="Errington H."/>
            <person name="Frankish A."/>
            <person name="Frankland J."/>
            <person name="French L."/>
            <person name="Garner P."/>
            <person name="Garnett J."/>
            <person name="Gay L."/>
            <person name="Ghori M.R.J."/>
            <person name="Gibson R."/>
            <person name="Gilby L.M."/>
            <person name="Gillett W."/>
            <person name="Glithero R.J."/>
            <person name="Grafham D.V."/>
            <person name="Griffiths C."/>
            <person name="Griffiths-Jones S."/>
            <person name="Grocock R."/>
            <person name="Hammond S."/>
            <person name="Harrison E.S.I."/>
            <person name="Hart E."/>
            <person name="Haugen E."/>
            <person name="Heath P.D."/>
            <person name="Holmes S."/>
            <person name="Holt K."/>
            <person name="Howden P.J."/>
            <person name="Hunt A.R."/>
            <person name="Hunt S.E."/>
            <person name="Hunter G."/>
            <person name="Isherwood J."/>
            <person name="James R."/>
            <person name="Johnson C."/>
            <person name="Johnson D."/>
            <person name="Joy A."/>
            <person name="Kay M."/>
            <person name="Kershaw J.K."/>
            <person name="Kibukawa M."/>
            <person name="Kimberley A.M."/>
            <person name="King A."/>
            <person name="Knights A.J."/>
            <person name="Lad H."/>
            <person name="Laird G."/>
            <person name="Lawlor S."/>
            <person name="Leongamornlert D.A."/>
            <person name="Lloyd D.M."/>
            <person name="Loveland J."/>
            <person name="Lovell J."/>
            <person name="Lush M.J."/>
            <person name="Lyne R."/>
            <person name="Martin S."/>
            <person name="Mashreghi-Mohammadi M."/>
            <person name="Matthews L."/>
            <person name="Matthews N.S.W."/>
            <person name="McLaren S."/>
            <person name="Milne S."/>
            <person name="Mistry S."/>
            <person name="Moore M.J.F."/>
            <person name="Nickerson T."/>
            <person name="O'Dell C.N."/>
            <person name="Oliver K."/>
            <person name="Palmeiri A."/>
            <person name="Palmer S.A."/>
            <person name="Parker A."/>
            <person name="Patel D."/>
            <person name="Pearce A.V."/>
            <person name="Peck A.I."/>
            <person name="Pelan S."/>
            <person name="Phelps K."/>
            <person name="Phillimore B.J."/>
            <person name="Plumb R."/>
            <person name="Rajan J."/>
            <person name="Raymond C."/>
            <person name="Rouse G."/>
            <person name="Saenphimmachak C."/>
            <person name="Sehra H.K."/>
            <person name="Sheridan E."/>
            <person name="Shownkeen R."/>
            <person name="Sims S."/>
            <person name="Skuce C.D."/>
            <person name="Smith M."/>
            <person name="Steward C."/>
            <person name="Subramanian S."/>
            <person name="Sycamore N."/>
            <person name="Tracey A."/>
            <person name="Tromans A."/>
            <person name="Van Helmond Z."/>
            <person name="Wall M."/>
            <person name="Wallis J.M."/>
            <person name="White S."/>
            <person name="Whitehead S.L."/>
            <person name="Wilkinson J.E."/>
            <person name="Willey D.L."/>
            <person name="Williams H."/>
            <person name="Wilming L."/>
            <person name="Wray P.W."/>
            <person name="Wu Z."/>
            <person name="Coulson A."/>
            <person name="Vaudin M."/>
            <person name="Sulston J.E."/>
            <person name="Durbin R.M."/>
            <person name="Hubbard T."/>
            <person name="Wooster R."/>
            <person name="Dunham I."/>
            <person name="Carter N.P."/>
            <person name="McVean G."/>
            <person name="Ross M.T."/>
            <person name="Harrow J."/>
            <person name="Olson M.V."/>
            <person name="Beck S."/>
            <person name="Rogers J."/>
            <person name="Bentley D.R."/>
        </authorList>
    </citation>
    <scope>NUCLEOTIDE SEQUENCE [LARGE SCALE GENOMIC DNA]</scope>
</reference>
<reference key="2">
    <citation type="submission" date="2005-09" db="EMBL/GenBank/DDBJ databases">
        <authorList>
            <person name="Mural R.J."/>
            <person name="Istrail S."/>
            <person name="Sutton G.G."/>
            <person name="Florea L."/>
            <person name="Halpern A.L."/>
            <person name="Mobarry C.M."/>
            <person name="Lippert R."/>
            <person name="Walenz B."/>
            <person name="Shatkay H."/>
            <person name="Dew I."/>
            <person name="Miller J.R."/>
            <person name="Flanigan M.J."/>
            <person name="Edwards N.J."/>
            <person name="Bolanos R."/>
            <person name="Fasulo D."/>
            <person name="Halldorsson B.V."/>
            <person name="Hannenhalli S."/>
            <person name="Turner R."/>
            <person name="Yooseph S."/>
            <person name="Lu F."/>
            <person name="Nusskern D.R."/>
            <person name="Shue B.C."/>
            <person name="Zheng X.H."/>
            <person name="Zhong F."/>
            <person name="Delcher A.L."/>
            <person name="Huson D.H."/>
            <person name="Kravitz S.A."/>
            <person name="Mouchard L."/>
            <person name="Reinert K."/>
            <person name="Remington K.A."/>
            <person name="Clark A.G."/>
            <person name="Waterman M.S."/>
            <person name="Eichler E.E."/>
            <person name="Adams M.D."/>
            <person name="Hunkapiller M.W."/>
            <person name="Myers E.W."/>
            <person name="Venter J.C."/>
        </authorList>
    </citation>
    <scope>NUCLEOTIDE SEQUENCE [LARGE SCALE GENOMIC DNA]</scope>
</reference>
<reference key="3">
    <citation type="journal article" date="2005" name="J. Invest. Dermatol.">
        <title>Late cornified envelope family in differentiating epithelia -- response to calcium and ultraviolet irradiation.</title>
        <authorList>
            <person name="Jackson B."/>
            <person name="Tilli C.L."/>
            <person name="Hardman M."/>
            <person name="Avilion A."/>
            <person name="Macleod M."/>
            <person name="Ashcroft G."/>
            <person name="Byrne C."/>
        </authorList>
    </citation>
    <scope>NOMENCLATURE</scope>
    <scope>TISSUE SPECIFICITY</scope>
    <scope>INDUCTION BY UVB</scope>
</reference>
<reference key="4">
    <citation type="journal article" date="2023" name="J. Invest. Dermatol.">
        <title>CYSRT1: An Antimicrobial Epidermal Protein that Can Interact with Late Cornified Envelope Proteins.</title>
        <authorList>
            <person name="Niehues H."/>
            <person name="Rikken G."/>
            <person name="Kersten F.F.J."/>
            <person name="Eeftens J.M."/>
            <person name="van Vlijmen-Willems I.M.J.J."/>
            <person name="Rodijk-Olthuis D."/>
            <person name="Jansen P.A.M."/>
            <person name="Hendriks W.J.A.J."/>
            <person name="Ederveen T.H.A."/>
            <person name="Schalkwijk J."/>
            <person name="van den Bogaard E.H."/>
            <person name="Zeeuwen P.L.J.M."/>
        </authorList>
    </citation>
    <scope>INTERACTION WITH CYSRT1</scope>
</reference>
<dbReference type="EMBL" id="AL353779">
    <property type="status" value="NOT_ANNOTATED_CDS"/>
    <property type="molecule type" value="Genomic_DNA"/>
</dbReference>
<dbReference type="EMBL" id="CH471121">
    <property type="protein sequence ID" value="EAW53366.1"/>
    <property type="molecule type" value="Genomic_DNA"/>
</dbReference>
<dbReference type="EMBL" id="CH471121">
    <property type="protein sequence ID" value="EAW53367.1"/>
    <property type="molecule type" value="Genomic_DNA"/>
</dbReference>
<dbReference type="CCDS" id="CCDS1024.1"/>
<dbReference type="RefSeq" id="NP_848130.1">
    <property type="nucleotide sequence ID" value="NM_178353.2"/>
</dbReference>
<dbReference type="BioGRID" id="131642">
    <property type="interactions" value="68"/>
</dbReference>
<dbReference type="FunCoup" id="Q5T753">
    <property type="interactions" value="36"/>
</dbReference>
<dbReference type="IntAct" id="Q5T753">
    <property type="interactions" value="56"/>
</dbReference>
<dbReference type="STRING" id="9606.ENSP00000357759"/>
<dbReference type="iPTMnet" id="Q5T753"/>
<dbReference type="PhosphoSitePlus" id="Q5T753"/>
<dbReference type="BioMuta" id="LCE1E"/>
<dbReference type="DMDM" id="74745323"/>
<dbReference type="MassIVE" id="Q5T753"/>
<dbReference type="PaxDb" id="9606-ENSP00000357759"/>
<dbReference type="PeptideAtlas" id="Q5T753"/>
<dbReference type="Pumba" id="Q5T753"/>
<dbReference type="DNASU" id="353135"/>
<dbReference type="Ensembl" id="ENST00000368770.4">
    <property type="protein sequence ID" value="ENSP00000357759.3"/>
    <property type="gene ID" value="ENSG00000186226.9"/>
</dbReference>
<dbReference type="Ensembl" id="ENST00000368771.1">
    <property type="protein sequence ID" value="ENSP00000357760.1"/>
    <property type="gene ID" value="ENSG00000186226.9"/>
</dbReference>
<dbReference type="GeneID" id="353135"/>
<dbReference type="KEGG" id="hsa:353135"/>
<dbReference type="MANE-Select" id="ENST00000368770.4">
    <property type="protein sequence ID" value="ENSP00000357759.3"/>
    <property type="RefSeq nucleotide sequence ID" value="NM_178353.2"/>
    <property type="RefSeq protein sequence ID" value="NP_848130.1"/>
</dbReference>
<dbReference type="UCSC" id="uc001fan.4">
    <property type="organism name" value="human"/>
</dbReference>
<dbReference type="AGR" id="HGNC:29466"/>
<dbReference type="CTD" id="353135"/>
<dbReference type="GeneCards" id="LCE1E"/>
<dbReference type="HGNC" id="HGNC:29466">
    <property type="gene designation" value="LCE1E"/>
</dbReference>
<dbReference type="HPA" id="ENSG00000186226">
    <property type="expression patterns" value="Tissue enriched (skin)"/>
</dbReference>
<dbReference type="MIM" id="612607">
    <property type="type" value="gene"/>
</dbReference>
<dbReference type="neXtProt" id="NX_Q5T753"/>
<dbReference type="OpenTargets" id="ENSG00000186226"/>
<dbReference type="PharmGKB" id="PA134866413"/>
<dbReference type="VEuPathDB" id="HostDB:ENSG00000186226"/>
<dbReference type="GeneTree" id="ENSGT00950000183301"/>
<dbReference type="HOGENOM" id="CLU_152038_0_0_1"/>
<dbReference type="InParanoid" id="Q5T753"/>
<dbReference type="OMA" id="TTKCPPK"/>
<dbReference type="PAN-GO" id="Q5T753">
    <property type="GO annotations" value="0 GO annotations based on evolutionary models"/>
</dbReference>
<dbReference type="PathwayCommons" id="Q5T753"/>
<dbReference type="Reactome" id="R-HSA-6809371">
    <property type="pathway name" value="Formation of the cornified envelope"/>
</dbReference>
<dbReference type="SignaLink" id="Q5T753"/>
<dbReference type="BioGRID-ORCS" id="353135">
    <property type="hits" value="328 hits in 1036 CRISPR screens"/>
</dbReference>
<dbReference type="GenomeRNAi" id="353135"/>
<dbReference type="Pharos" id="Q5T753">
    <property type="development level" value="Tdark"/>
</dbReference>
<dbReference type="PRO" id="PR:Q5T753"/>
<dbReference type="Proteomes" id="UP000005640">
    <property type="component" value="Chromosome 1"/>
</dbReference>
<dbReference type="RNAct" id="Q5T753">
    <property type="molecule type" value="protein"/>
</dbReference>
<dbReference type="Bgee" id="ENSG00000186226">
    <property type="expression patterns" value="Expressed in skin of leg and 59 other cell types or tissues"/>
</dbReference>
<dbReference type="ExpressionAtlas" id="Q5T753">
    <property type="expression patterns" value="baseline and differential"/>
</dbReference>
<dbReference type="GO" id="GO:0042802">
    <property type="term" value="F:identical protein binding"/>
    <property type="evidence" value="ECO:0000353"/>
    <property type="project" value="IntAct"/>
</dbReference>
<dbReference type="GO" id="GO:0031424">
    <property type="term" value="P:keratinization"/>
    <property type="evidence" value="ECO:0007669"/>
    <property type="project" value="UniProtKB-KW"/>
</dbReference>
<dbReference type="InterPro" id="IPR028205">
    <property type="entry name" value="LCE"/>
</dbReference>
<dbReference type="Pfam" id="PF14672">
    <property type="entry name" value="LCE"/>
    <property type="match status" value="3"/>
</dbReference>
<dbReference type="PRINTS" id="PR00021">
    <property type="entry name" value="PRORICH"/>
</dbReference>
<name>LCE1E_HUMAN</name>
<protein>
    <recommendedName>
        <fullName>Late cornified envelope protein 1E</fullName>
    </recommendedName>
    <alternativeName>
        <fullName>Late envelope protein 5</fullName>
    </alternativeName>
</protein>
<evidence type="ECO:0000256" key="1">
    <source>
        <dbReference type="SAM" id="MobiDB-lite"/>
    </source>
</evidence>
<evidence type="ECO:0000269" key="2">
    <source>
    </source>
</evidence>
<evidence type="ECO:0000269" key="3">
    <source>
    </source>
</evidence>
<evidence type="ECO:0000305" key="4"/>
<organism>
    <name type="scientific">Homo sapiens</name>
    <name type="common">Human</name>
    <dbReference type="NCBI Taxonomy" id="9606"/>
    <lineage>
        <taxon>Eukaryota</taxon>
        <taxon>Metazoa</taxon>
        <taxon>Chordata</taxon>
        <taxon>Craniata</taxon>
        <taxon>Vertebrata</taxon>
        <taxon>Euteleostomi</taxon>
        <taxon>Mammalia</taxon>
        <taxon>Eutheria</taxon>
        <taxon>Euarchontoglires</taxon>
        <taxon>Primates</taxon>
        <taxon>Haplorrhini</taxon>
        <taxon>Catarrhini</taxon>
        <taxon>Hominidae</taxon>
        <taxon>Homo</taxon>
    </lineage>
</organism>
<keyword id="KW-0417">Keratinization</keyword>
<keyword id="KW-1185">Reference proteome</keyword>
<sequence length="118" mass="11616">MSCQQSQQQCQPPPKCTPKCPPKCPTPKCPPKCPPKCPPVSSCCSVSSGGCCGSSSGGSCGSSSGGCCSSGGGGCCLSHHRHHRSHRHRPQSSDCCSQPSGGSSCCGGGSGQHSGGCC</sequence>
<accession>Q5T753</accession>
<accession>D3DV30</accession>